<gene>
    <name evidence="1" type="primary">ycgL</name>
    <name type="ordered locus">SPC_1917</name>
</gene>
<proteinExistence type="inferred from homology"/>
<feature type="chain" id="PRO_1000188713" description="Protein YcgL">
    <location>
        <begin position="1"/>
        <end position="110"/>
    </location>
</feature>
<feature type="domain" description="YcgL" evidence="1">
    <location>
        <begin position="14"/>
        <end position="98"/>
    </location>
</feature>
<feature type="region of interest" description="Disordered" evidence="2">
    <location>
        <begin position="87"/>
        <end position="110"/>
    </location>
</feature>
<feature type="compositionally biased region" description="Polar residues" evidence="2">
    <location>
        <begin position="97"/>
        <end position="110"/>
    </location>
</feature>
<evidence type="ECO:0000255" key="1">
    <source>
        <dbReference type="HAMAP-Rule" id="MF_01866"/>
    </source>
</evidence>
<evidence type="ECO:0000256" key="2">
    <source>
        <dbReference type="SAM" id="MobiDB-lite"/>
    </source>
</evidence>
<dbReference type="EMBL" id="CP000857">
    <property type="protein sequence ID" value="ACN46054.1"/>
    <property type="molecule type" value="Genomic_DNA"/>
</dbReference>
<dbReference type="SMR" id="C0Q322"/>
<dbReference type="KEGG" id="sei:SPC_1917"/>
<dbReference type="HOGENOM" id="CLU_155118_1_0_6"/>
<dbReference type="Proteomes" id="UP000001599">
    <property type="component" value="Chromosome"/>
</dbReference>
<dbReference type="Gene3D" id="3.10.510.20">
    <property type="entry name" value="YcgL domain"/>
    <property type="match status" value="1"/>
</dbReference>
<dbReference type="HAMAP" id="MF_01866">
    <property type="entry name" value="UPF0745"/>
    <property type="match status" value="1"/>
</dbReference>
<dbReference type="InterPro" id="IPR038068">
    <property type="entry name" value="YcgL-like_sf"/>
</dbReference>
<dbReference type="InterPro" id="IPR027354">
    <property type="entry name" value="YcgL_dom"/>
</dbReference>
<dbReference type="PANTHER" id="PTHR38109">
    <property type="entry name" value="PROTEIN YCGL"/>
    <property type="match status" value="1"/>
</dbReference>
<dbReference type="PANTHER" id="PTHR38109:SF1">
    <property type="entry name" value="PROTEIN YCGL"/>
    <property type="match status" value="1"/>
</dbReference>
<dbReference type="Pfam" id="PF05166">
    <property type="entry name" value="YcgL"/>
    <property type="match status" value="1"/>
</dbReference>
<dbReference type="SUPFAM" id="SSF160191">
    <property type="entry name" value="YcgL-like"/>
    <property type="match status" value="1"/>
</dbReference>
<dbReference type="PROSITE" id="PS51648">
    <property type="entry name" value="YCGL"/>
    <property type="match status" value="1"/>
</dbReference>
<protein>
    <recommendedName>
        <fullName evidence="1">Protein YcgL</fullName>
    </recommendedName>
</protein>
<accession>C0Q322</accession>
<reference key="1">
    <citation type="journal article" date="2009" name="PLoS ONE">
        <title>Salmonella paratyphi C: genetic divergence from Salmonella choleraesuis and pathogenic convergence with Salmonella typhi.</title>
        <authorList>
            <person name="Liu W.-Q."/>
            <person name="Feng Y."/>
            <person name="Wang Y."/>
            <person name="Zou Q.-H."/>
            <person name="Chen F."/>
            <person name="Guo J.-T."/>
            <person name="Peng Y.-H."/>
            <person name="Jin Y."/>
            <person name="Li Y.-G."/>
            <person name="Hu S.-N."/>
            <person name="Johnston R.N."/>
            <person name="Liu G.-R."/>
            <person name="Liu S.-L."/>
        </authorList>
    </citation>
    <scope>NUCLEOTIDE SEQUENCE [LARGE SCALE GENOMIC DNA]</scope>
    <source>
        <strain>RKS4594</strain>
    </source>
</reference>
<sequence length="110" mass="12585">MRQVTIPLIQSKSMFCVIYRSSKRDQTYLYVEKKDDFSRVPEALMKGFGQPQLAMMLPLDGRKKLVNAELEKVKQALSEQGYYLQLPPPPEDLLKQHLSSVGQNTSPADR</sequence>
<name>YCGL_SALPC</name>
<organism>
    <name type="scientific">Salmonella paratyphi C (strain RKS4594)</name>
    <dbReference type="NCBI Taxonomy" id="476213"/>
    <lineage>
        <taxon>Bacteria</taxon>
        <taxon>Pseudomonadati</taxon>
        <taxon>Pseudomonadota</taxon>
        <taxon>Gammaproteobacteria</taxon>
        <taxon>Enterobacterales</taxon>
        <taxon>Enterobacteriaceae</taxon>
        <taxon>Salmonella</taxon>
    </lineage>
</organism>